<protein>
    <recommendedName>
        <fullName evidence="1">Ribosomal protein L11 methyltransferase</fullName>
        <shortName evidence="1">L11 Mtase</shortName>
        <ecNumber evidence="1">2.1.1.-</ecNumber>
    </recommendedName>
</protein>
<keyword id="KW-0963">Cytoplasm</keyword>
<keyword id="KW-0489">Methyltransferase</keyword>
<keyword id="KW-0949">S-adenosyl-L-methionine</keyword>
<keyword id="KW-0808">Transferase</keyword>
<proteinExistence type="inferred from homology"/>
<name>PRMA_HISS1</name>
<dbReference type="EC" id="2.1.1.-" evidence="1"/>
<dbReference type="EMBL" id="CP000436">
    <property type="protein sequence ID" value="ABI24843.1"/>
    <property type="molecule type" value="Genomic_DNA"/>
</dbReference>
<dbReference type="SMR" id="Q0I1Y6"/>
<dbReference type="KEGG" id="hso:HS_0566"/>
<dbReference type="eggNOG" id="COG2264">
    <property type="taxonomic scope" value="Bacteria"/>
</dbReference>
<dbReference type="HOGENOM" id="CLU_049382_4_1_6"/>
<dbReference type="GO" id="GO:0005829">
    <property type="term" value="C:cytosol"/>
    <property type="evidence" value="ECO:0007669"/>
    <property type="project" value="TreeGrafter"/>
</dbReference>
<dbReference type="GO" id="GO:0016279">
    <property type="term" value="F:protein-lysine N-methyltransferase activity"/>
    <property type="evidence" value="ECO:0007669"/>
    <property type="project" value="TreeGrafter"/>
</dbReference>
<dbReference type="GO" id="GO:0032259">
    <property type="term" value="P:methylation"/>
    <property type="evidence" value="ECO:0007669"/>
    <property type="project" value="UniProtKB-KW"/>
</dbReference>
<dbReference type="CDD" id="cd02440">
    <property type="entry name" value="AdoMet_MTases"/>
    <property type="match status" value="1"/>
</dbReference>
<dbReference type="Gene3D" id="3.40.50.150">
    <property type="entry name" value="Vaccinia Virus protein VP39"/>
    <property type="match status" value="1"/>
</dbReference>
<dbReference type="HAMAP" id="MF_00735">
    <property type="entry name" value="Methyltr_PrmA"/>
    <property type="match status" value="1"/>
</dbReference>
<dbReference type="InterPro" id="IPR050078">
    <property type="entry name" value="Ribosomal_L11_MeTrfase_PrmA"/>
</dbReference>
<dbReference type="InterPro" id="IPR004498">
    <property type="entry name" value="Ribosomal_PrmA_MeTrfase"/>
</dbReference>
<dbReference type="InterPro" id="IPR029063">
    <property type="entry name" value="SAM-dependent_MTases_sf"/>
</dbReference>
<dbReference type="NCBIfam" id="TIGR00406">
    <property type="entry name" value="prmA"/>
    <property type="match status" value="1"/>
</dbReference>
<dbReference type="PANTHER" id="PTHR43648">
    <property type="entry name" value="ELECTRON TRANSFER FLAVOPROTEIN BETA SUBUNIT LYSINE METHYLTRANSFERASE"/>
    <property type="match status" value="1"/>
</dbReference>
<dbReference type="PANTHER" id="PTHR43648:SF1">
    <property type="entry name" value="ELECTRON TRANSFER FLAVOPROTEIN BETA SUBUNIT LYSINE METHYLTRANSFERASE"/>
    <property type="match status" value="1"/>
</dbReference>
<dbReference type="Pfam" id="PF06325">
    <property type="entry name" value="PrmA"/>
    <property type="match status" value="1"/>
</dbReference>
<dbReference type="PIRSF" id="PIRSF000401">
    <property type="entry name" value="RPL11_MTase"/>
    <property type="match status" value="1"/>
</dbReference>
<dbReference type="SUPFAM" id="SSF53335">
    <property type="entry name" value="S-adenosyl-L-methionine-dependent methyltransferases"/>
    <property type="match status" value="1"/>
</dbReference>
<reference key="1">
    <citation type="journal article" date="2007" name="J. Bacteriol.">
        <title>Complete genome sequence of Haemophilus somnus (Histophilus somni) strain 129Pt and comparison to Haemophilus ducreyi 35000HP and Haemophilus influenzae Rd.</title>
        <authorList>
            <person name="Challacombe J.F."/>
            <person name="Duncan A.J."/>
            <person name="Brettin T.S."/>
            <person name="Bruce D."/>
            <person name="Chertkov O."/>
            <person name="Detter J.C."/>
            <person name="Han C.S."/>
            <person name="Misra M."/>
            <person name="Richardson P."/>
            <person name="Tapia R."/>
            <person name="Thayer N."/>
            <person name="Xie G."/>
            <person name="Inzana T.J."/>
        </authorList>
    </citation>
    <scope>NUCLEOTIDE SEQUENCE [LARGE SCALE GENOMIC DNA]</scope>
    <source>
        <strain>129Pt</strain>
    </source>
</reference>
<feature type="chain" id="PRO_1000046030" description="Ribosomal protein L11 methyltransferase">
    <location>
        <begin position="1"/>
        <end position="296"/>
    </location>
</feature>
<feature type="binding site" evidence="1">
    <location>
        <position position="145"/>
    </location>
    <ligand>
        <name>S-adenosyl-L-methionine</name>
        <dbReference type="ChEBI" id="CHEBI:59789"/>
    </ligand>
</feature>
<feature type="binding site" evidence="1">
    <location>
        <position position="166"/>
    </location>
    <ligand>
        <name>S-adenosyl-L-methionine</name>
        <dbReference type="ChEBI" id="CHEBI:59789"/>
    </ligand>
</feature>
<feature type="binding site" evidence="1">
    <location>
        <position position="188"/>
    </location>
    <ligand>
        <name>S-adenosyl-L-methionine</name>
        <dbReference type="ChEBI" id="CHEBI:59789"/>
    </ligand>
</feature>
<feature type="binding site" evidence="1">
    <location>
        <position position="230"/>
    </location>
    <ligand>
        <name>S-adenosyl-L-methionine</name>
        <dbReference type="ChEBI" id="CHEBI:59789"/>
    </ligand>
</feature>
<gene>
    <name evidence="1" type="primary">prmA</name>
    <name type="ordered locus">HS_0566</name>
</gene>
<organism>
    <name type="scientific">Histophilus somni (strain 129Pt)</name>
    <name type="common">Haemophilus somnus</name>
    <dbReference type="NCBI Taxonomy" id="205914"/>
    <lineage>
        <taxon>Bacteria</taxon>
        <taxon>Pseudomonadati</taxon>
        <taxon>Pseudomonadota</taxon>
        <taxon>Gammaproteobacteria</taxon>
        <taxon>Pasteurellales</taxon>
        <taxon>Pasteurellaceae</taxon>
        <taxon>Histophilus</taxon>
    </lineage>
</organism>
<accession>Q0I1Y6</accession>
<sequence>MAWVQLRLNSTNEKAEKISEYLEEIGAVSVTFMDSQDTPIFEPLPGETRLWGNTDVIALFDAETNMQQIVRLLQQKNHLDENTAYKIEQIEDKDWEREWMDNFHPMKFGKRLWICPSWREIPDENAINVMLDPGLAFGTGTHPTTALCLEWLDSLDLTGKTVIDFGCGSGILAIAALKLGAKSAVGIDIDPQAILASYNNAEQNGVAERLQLFLSEEKPTDLQADVVIANILAGPLKELYPIISNLVKPQGDLGLSGILSTQADSVCEAYQGKFTLDPITEREEWCRITGKLNSFV</sequence>
<comment type="function">
    <text evidence="1">Methylates ribosomal protein L11.</text>
</comment>
<comment type="catalytic activity">
    <reaction evidence="1">
        <text>L-lysyl-[protein] + 3 S-adenosyl-L-methionine = N(6),N(6),N(6)-trimethyl-L-lysyl-[protein] + 3 S-adenosyl-L-homocysteine + 3 H(+)</text>
        <dbReference type="Rhea" id="RHEA:54192"/>
        <dbReference type="Rhea" id="RHEA-COMP:9752"/>
        <dbReference type="Rhea" id="RHEA-COMP:13826"/>
        <dbReference type="ChEBI" id="CHEBI:15378"/>
        <dbReference type="ChEBI" id="CHEBI:29969"/>
        <dbReference type="ChEBI" id="CHEBI:57856"/>
        <dbReference type="ChEBI" id="CHEBI:59789"/>
        <dbReference type="ChEBI" id="CHEBI:61961"/>
    </reaction>
</comment>
<comment type="subcellular location">
    <subcellularLocation>
        <location evidence="1">Cytoplasm</location>
    </subcellularLocation>
</comment>
<comment type="similarity">
    <text evidence="1">Belongs to the methyltransferase superfamily. PrmA family.</text>
</comment>
<evidence type="ECO:0000255" key="1">
    <source>
        <dbReference type="HAMAP-Rule" id="MF_00735"/>
    </source>
</evidence>